<name>YL352_YEAST</name>
<feature type="chain" id="PRO_0000268189" description="F-box protein YLR352W">
    <location>
        <begin position="1"/>
        <end position="807"/>
    </location>
</feature>
<feature type="domain" description="F-box">
    <location>
        <begin position="220"/>
        <end position="266"/>
    </location>
</feature>
<feature type="region of interest" description="Disordered" evidence="2">
    <location>
        <begin position="607"/>
        <end position="647"/>
    </location>
</feature>
<feature type="region of interest" description="Disordered" evidence="2">
    <location>
        <begin position="716"/>
        <end position="739"/>
    </location>
</feature>
<feature type="compositionally biased region" description="Basic and acidic residues" evidence="2">
    <location>
        <begin position="607"/>
        <end position="616"/>
    </location>
</feature>
<feature type="compositionally biased region" description="Polar residues" evidence="2">
    <location>
        <begin position="627"/>
        <end position="644"/>
    </location>
</feature>
<feature type="compositionally biased region" description="Polar residues" evidence="2">
    <location>
        <begin position="723"/>
        <end position="736"/>
    </location>
</feature>
<comment type="function">
    <text evidence="1">Substrate recognition component of a SCF (SKP1-CUL1-F-box protein) E3 ubiquitin-protein ligase complex which mediates the ubiquitination and subsequent proteasomal degradation of target proteins. Probably recognizes and binds to phosphorylated target proteins (By similarity).</text>
</comment>
<comment type="pathway">
    <text>Protein modification; protein ubiquitination.</text>
</comment>
<comment type="subunit">
    <text evidence="3">Interacts with SKP1 and CDC53. Component of the probable SCF(YBR352W) complex containing CDC53, SKP1, RBX1 and YBR352W.</text>
</comment>
<comment type="interaction">
    <interactant intactId="EBI-35627">
        <id>Q06479</id>
    </interactant>
    <interactant intactId="EBI-4090">
        <id>P52286</id>
        <label>SKP1</label>
    </interactant>
    <organismsDiffer>false</organismsDiffer>
    <experiments>4</experiments>
</comment>
<comment type="miscellaneous">
    <text evidence="4">Present with 125 molecules/cell in log phase SD medium.</text>
</comment>
<evidence type="ECO:0000250" key="1"/>
<evidence type="ECO:0000256" key="2">
    <source>
        <dbReference type="SAM" id="MobiDB-lite"/>
    </source>
</evidence>
<evidence type="ECO:0000269" key="3">
    <source>
    </source>
</evidence>
<evidence type="ECO:0000269" key="4">
    <source>
    </source>
</evidence>
<protein>
    <recommendedName>
        <fullName>F-box protein YLR352W</fullName>
    </recommendedName>
</protein>
<accession>Q06479</accession>
<accession>D6VYZ0</accession>
<proteinExistence type="evidence at protein level"/>
<organism>
    <name type="scientific">Saccharomyces cerevisiae (strain ATCC 204508 / S288c)</name>
    <name type="common">Baker's yeast</name>
    <dbReference type="NCBI Taxonomy" id="559292"/>
    <lineage>
        <taxon>Eukaryota</taxon>
        <taxon>Fungi</taxon>
        <taxon>Dikarya</taxon>
        <taxon>Ascomycota</taxon>
        <taxon>Saccharomycotina</taxon>
        <taxon>Saccharomycetes</taxon>
        <taxon>Saccharomycetales</taxon>
        <taxon>Saccharomycetaceae</taxon>
        <taxon>Saccharomyces</taxon>
    </lineage>
</organism>
<sequence>MPDLKSKTLSSQSLGAAIPPEIVYQILTYQFRDLLRNDHPGTAEKFNENLTTFVKSNLTVNKTFSHICQVLIYRYCNLTTAKRFHGLLQTLKGNRCLCNKIEVADFQELTSIGLGRSSEMNKMIKNLTNETLLEFLMLTKANLREFLACENIQDDLDDNIIKYILSPGKVLSVVDFCGCSGTTFTESFIKALDKYYPNKSIDQYRLEPIQQNYQITCLGLNDCIDLPSHVLWKILKMLPELQKLDLSHTSIDDSTLYHGIPHWKNLTHLSLATCLQVTPRAVLEFFSHHPTITDPDNTSTLEWLNVSVIAHSSSWNEVHTMFLLKKLCQHGHNKTLQYLNIGGLPLHVAPSFGEDPISESTYYYQCRDSLQFIKWNFPKLKSLSIKGNSIPISTLVEFLTPIDQDHPNCAQKLKFLNISGNSYVNKWTIQDSLLYTCSPSLVALEVSFDSWQQIEKLNDRHEIIAYRYKNPNSVIKDISTAEQVKWKCYIDSSYGRRYWLYKTDPFLNRDDLDSKSNLTRYDFEGHKIIEIINQPDFLKFAQSKIMLGCGLVPQSGIRRKLCYRDLKPPVSQFLNRKGAISLGDTPLPIITPTLPRGGWRIIHNEDDNNSHVEDSQNHVNAIPRRNSLLSRPTLRSNNGSSSANPFAINVSPASQIRDGLYWDRSVHDLRELSLQEQRIQELADEQQELRTIANFEETDDEYLHDPDLQRRRSQLHLFESSRSRSGNKTRPSLTGEHSSSASFLSFSHFNHLHKRKNYYFTHPDEFVYDPKDPLTTQRYRLHFEIVNEYQVFGCIERGMYRYYSLKA</sequence>
<reference key="1">
    <citation type="journal article" date="1997" name="Nature">
        <title>The nucleotide sequence of Saccharomyces cerevisiae chromosome XII.</title>
        <authorList>
            <person name="Johnston M."/>
            <person name="Hillier L.W."/>
            <person name="Riles L."/>
            <person name="Albermann K."/>
            <person name="Andre B."/>
            <person name="Ansorge W."/>
            <person name="Benes V."/>
            <person name="Brueckner M."/>
            <person name="Delius H."/>
            <person name="Dubois E."/>
            <person name="Duesterhoeft A."/>
            <person name="Entian K.-D."/>
            <person name="Floeth M."/>
            <person name="Goffeau A."/>
            <person name="Hebling U."/>
            <person name="Heumann K."/>
            <person name="Heuss-Neitzel D."/>
            <person name="Hilbert H."/>
            <person name="Hilger F."/>
            <person name="Kleine K."/>
            <person name="Koetter P."/>
            <person name="Louis E.J."/>
            <person name="Messenguy F."/>
            <person name="Mewes H.-W."/>
            <person name="Miosga T."/>
            <person name="Moestl D."/>
            <person name="Mueller-Auer S."/>
            <person name="Nentwich U."/>
            <person name="Obermaier B."/>
            <person name="Piravandi E."/>
            <person name="Pohl T.M."/>
            <person name="Portetelle D."/>
            <person name="Purnelle B."/>
            <person name="Rechmann S."/>
            <person name="Rieger M."/>
            <person name="Rinke M."/>
            <person name="Rose M."/>
            <person name="Scharfe M."/>
            <person name="Scherens B."/>
            <person name="Scholler P."/>
            <person name="Schwager C."/>
            <person name="Schwarz S."/>
            <person name="Underwood A.P."/>
            <person name="Urrestarazu L.A."/>
            <person name="Vandenbol M."/>
            <person name="Verhasselt P."/>
            <person name="Vierendeels F."/>
            <person name="Voet M."/>
            <person name="Volckaert G."/>
            <person name="Voss H."/>
            <person name="Wambutt R."/>
            <person name="Wedler E."/>
            <person name="Wedler H."/>
            <person name="Zimmermann F.K."/>
            <person name="Zollner A."/>
            <person name="Hani J."/>
            <person name="Hoheisel J.D."/>
        </authorList>
    </citation>
    <scope>NUCLEOTIDE SEQUENCE [LARGE SCALE GENOMIC DNA]</scope>
    <source>
        <strain>ATCC 204508 / S288c</strain>
    </source>
</reference>
<reference key="2">
    <citation type="journal article" date="2014" name="G3 (Bethesda)">
        <title>The reference genome sequence of Saccharomyces cerevisiae: Then and now.</title>
        <authorList>
            <person name="Engel S.R."/>
            <person name="Dietrich F.S."/>
            <person name="Fisk D.G."/>
            <person name="Binkley G."/>
            <person name="Balakrishnan R."/>
            <person name="Costanzo M.C."/>
            <person name="Dwight S.S."/>
            <person name="Hitz B.C."/>
            <person name="Karra K."/>
            <person name="Nash R.S."/>
            <person name="Weng S."/>
            <person name="Wong E.D."/>
            <person name="Lloyd P."/>
            <person name="Skrzypek M.S."/>
            <person name="Miyasato S.R."/>
            <person name="Simison M."/>
            <person name="Cherry J.M."/>
        </authorList>
    </citation>
    <scope>GENOME REANNOTATION</scope>
    <source>
        <strain>ATCC 204508 / S288c</strain>
    </source>
</reference>
<reference key="3">
    <citation type="journal article" date="2001" name="Nat. Cell Biol.">
        <title>Skp1 forms multiple protein complexes, including RAVE, a regulator of V-ATPase assembly.</title>
        <authorList>
            <person name="Seol J.H."/>
            <person name="Shevchenko A."/>
            <person name="Shevchenko A."/>
            <person name="Deshaies R.J."/>
        </authorList>
    </citation>
    <scope>INTERACTION WITH CDC53 AND SKP1</scope>
    <scope>IDENTIFICATION BY MASS SPECTROMETRY</scope>
    <scope>DOMAIN F-BOX</scope>
</reference>
<reference key="4">
    <citation type="journal article" date="2003" name="Nature">
        <title>Global analysis of protein expression in yeast.</title>
        <authorList>
            <person name="Ghaemmaghami S."/>
            <person name="Huh W.-K."/>
            <person name="Bower K."/>
            <person name="Howson R.W."/>
            <person name="Belle A."/>
            <person name="Dephoure N."/>
            <person name="O'Shea E.K."/>
            <person name="Weissman J.S."/>
        </authorList>
    </citation>
    <scope>LEVEL OF PROTEIN EXPRESSION [LARGE SCALE ANALYSIS]</scope>
</reference>
<keyword id="KW-1185">Reference proteome</keyword>
<keyword id="KW-0833">Ubl conjugation pathway</keyword>
<dbReference type="EMBL" id="U19102">
    <property type="protein sequence ID" value="AAB67750.1"/>
    <property type="molecule type" value="Genomic_DNA"/>
</dbReference>
<dbReference type="EMBL" id="BK006945">
    <property type="protein sequence ID" value="DAA09656.1"/>
    <property type="molecule type" value="Genomic_DNA"/>
</dbReference>
<dbReference type="PIR" id="S51460">
    <property type="entry name" value="S51460"/>
</dbReference>
<dbReference type="BioGRID" id="31614">
    <property type="interactions" value="98"/>
</dbReference>
<dbReference type="ComplexPortal" id="CPX-3253">
    <property type="entry name" value="SCF-Ylr352w ubiquitin ligase complex"/>
</dbReference>
<dbReference type="DIP" id="DIP-1631N"/>
<dbReference type="FunCoup" id="Q06479">
    <property type="interactions" value="107"/>
</dbReference>
<dbReference type="IntAct" id="Q06479">
    <property type="interactions" value="17"/>
</dbReference>
<dbReference type="MINT" id="Q06479"/>
<dbReference type="STRING" id="4932.YLR352W"/>
<dbReference type="iPTMnet" id="Q06479"/>
<dbReference type="PaxDb" id="4932-YLR352W"/>
<dbReference type="PeptideAtlas" id="Q06479"/>
<dbReference type="EnsemblFungi" id="YLR352W_mRNA">
    <property type="protein sequence ID" value="YLR352W"/>
    <property type="gene ID" value="YLR352W"/>
</dbReference>
<dbReference type="KEGG" id="sce:YLR352W"/>
<dbReference type="AGR" id="SGD:S000004344"/>
<dbReference type="SGD" id="S000004344">
    <property type="gene designation" value="YLR352W"/>
</dbReference>
<dbReference type="VEuPathDB" id="FungiDB:YLR352W"/>
<dbReference type="eggNOG" id="ENOG502R9EV">
    <property type="taxonomic scope" value="Eukaryota"/>
</dbReference>
<dbReference type="HOGENOM" id="CLU_348554_0_0_1"/>
<dbReference type="InParanoid" id="Q06479"/>
<dbReference type="OMA" id="ERGMYRY"/>
<dbReference type="OrthoDB" id="9994419at2759"/>
<dbReference type="BioCyc" id="YEAST:G3O-32426-MONOMER"/>
<dbReference type="Reactome" id="R-SCE-8854050">
    <property type="pathway name" value="FBXL7 down-regulates AURKA during mitotic entry and in early mitosis"/>
</dbReference>
<dbReference type="Reactome" id="R-SCE-917937">
    <property type="pathway name" value="Iron uptake and transport"/>
</dbReference>
<dbReference type="Reactome" id="R-SCE-983168">
    <property type="pathway name" value="Antigen processing: Ubiquitination &amp; Proteasome degradation"/>
</dbReference>
<dbReference type="UniPathway" id="UPA00143"/>
<dbReference type="BioGRID-ORCS" id="851066">
    <property type="hits" value="1 hit in 10 CRISPR screens"/>
</dbReference>
<dbReference type="PRO" id="PR:Q06479"/>
<dbReference type="Proteomes" id="UP000002311">
    <property type="component" value="Chromosome XII"/>
</dbReference>
<dbReference type="RNAct" id="Q06479">
    <property type="molecule type" value="protein"/>
</dbReference>
<dbReference type="GO" id="GO:0019005">
    <property type="term" value="C:SCF ubiquitin ligase complex"/>
    <property type="evidence" value="ECO:0000314"/>
    <property type="project" value="SGD"/>
</dbReference>
<dbReference type="GO" id="GO:0016567">
    <property type="term" value="P:protein ubiquitination"/>
    <property type="evidence" value="ECO:0007669"/>
    <property type="project" value="UniProtKB-UniPathway"/>
</dbReference>
<dbReference type="GO" id="GO:0031146">
    <property type="term" value="P:SCF-dependent proteasomal ubiquitin-dependent protein catabolic process"/>
    <property type="evidence" value="ECO:0000318"/>
    <property type="project" value="GO_Central"/>
</dbReference>
<dbReference type="GO" id="GO:0006511">
    <property type="term" value="P:ubiquitin-dependent protein catabolic process"/>
    <property type="evidence" value="ECO:0000314"/>
    <property type="project" value="ComplexPortal"/>
</dbReference>
<dbReference type="FunFam" id="3.80.10.10:FF:001738">
    <property type="entry name" value="F-box protein YLR352W"/>
    <property type="match status" value="1"/>
</dbReference>
<dbReference type="Gene3D" id="3.80.10.10">
    <property type="entry name" value="Ribonuclease Inhibitor"/>
    <property type="match status" value="1"/>
</dbReference>
<dbReference type="InterPro" id="IPR032675">
    <property type="entry name" value="LRR_dom_sf"/>
</dbReference>
<dbReference type="PANTHER" id="PTHR13318:SF95">
    <property type="entry name" value="F-BOX PROTEIN YLR352W"/>
    <property type="match status" value="1"/>
</dbReference>
<dbReference type="PANTHER" id="PTHR13318">
    <property type="entry name" value="PARTNER OF PAIRED, ISOFORM B-RELATED"/>
    <property type="match status" value="1"/>
</dbReference>
<dbReference type="SUPFAM" id="SSF52047">
    <property type="entry name" value="RNI-like"/>
    <property type="match status" value="1"/>
</dbReference>
<gene>
    <name type="ordered locus">YLR352W</name>
</gene>